<keyword id="KW-0001">2Fe-2S</keyword>
<keyword id="KW-0004">4Fe-4S</keyword>
<keyword id="KW-0093">Biotin biosynthesis</keyword>
<keyword id="KW-0408">Iron</keyword>
<keyword id="KW-0411">Iron-sulfur</keyword>
<keyword id="KW-0479">Metal-binding</keyword>
<keyword id="KW-1185">Reference proteome</keyword>
<keyword id="KW-0949">S-adenosyl-L-methionine</keyword>
<keyword id="KW-0808">Transferase</keyword>
<accession>Q12D73</accession>
<comment type="function">
    <text evidence="1">Catalyzes the conversion of dethiobiotin (DTB) to biotin by the insertion of a sulfur atom into dethiobiotin via a radical-based mechanism.</text>
</comment>
<comment type="catalytic activity">
    <reaction evidence="1">
        <text>(4R,5S)-dethiobiotin + (sulfur carrier)-SH + 2 reduced [2Fe-2S]-[ferredoxin] + 2 S-adenosyl-L-methionine = (sulfur carrier)-H + biotin + 2 5'-deoxyadenosine + 2 L-methionine + 2 oxidized [2Fe-2S]-[ferredoxin]</text>
        <dbReference type="Rhea" id="RHEA:22060"/>
        <dbReference type="Rhea" id="RHEA-COMP:10000"/>
        <dbReference type="Rhea" id="RHEA-COMP:10001"/>
        <dbReference type="Rhea" id="RHEA-COMP:14737"/>
        <dbReference type="Rhea" id="RHEA-COMP:14739"/>
        <dbReference type="ChEBI" id="CHEBI:17319"/>
        <dbReference type="ChEBI" id="CHEBI:29917"/>
        <dbReference type="ChEBI" id="CHEBI:33737"/>
        <dbReference type="ChEBI" id="CHEBI:33738"/>
        <dbReference type="ChEBI" id="CHEBI:57586"/>
        <dbReference type="ChEBI" id="CHEBI:57844"/>
        <dbReference type="ChEBI" id="CHEBI:59789"/>
        <dbReference type="ChEBI" id="CHEBI:64428"/>
        <dbReference type="ChEBI" id="CHEBI:149473"/>
        <dbReference type="EC" id="2.8.1.6"/>
    </reaction>
</comment>
<comment type="cofactor">
    <cofactor evidence="1">
        <name>[4Fe-4S] cluster</name>
        <dbReference type="ChEBI" id="CHEBI:49883"/>
    </cofactor>
    <text evidence="1">Binds 1 [4Fe-4S] cluster. The cluster is coordinated with 3 cysteines and an exchangeable S-adenosyl-L-methionine.</text>
</comment>
<comment type="cofactor">
    <cofactor evidence="1">
        <name>[2Fe-2S] cluster</name>
        <dbReference type="ChEBI" id="CHEBI:190135"/>
    </cofactor>
    <text evidence="1">Binds 1 [2Fe-2S] cluster. The cluster is coordinated with 3 cysteines and 1 arginine.</text>
</comment>
<comment type="pathway">
    <text evidence="1">Cofactor biosynthesis; biotin biosynthesis; biotin from 7,8-diaminononanoate: step 2/2.</text>
</comment>
<comment type="subunit">
    <text evidence="1">Homodimer.</text>
</comment>
<comment type="similarity">
    <text evidence="1">Belongs to the radical SAM superfamily. Biotin synthase family.</text>
</comment>
<comment type="sequence caution" evidence="3">
    <conflict type="erroneous initiation">
        <sequence resource="EMBL-CDS" id="ABE43519"/>
    </conflict>
</comment>
<protein>
    <recommendedName>
        <fullName evidence="1">Biotin synthase 2</fullName>
        <ecNumber evidence="1">2.8.1.6</ecNumber>
    </recommendedName>
</protein>
<sequence length="343" mass="37541">MSIATIPVSSLRRAPAPTTAPQAPLRWQVEDIAALYELPFMDLLFRAQQVHREHFDANEVQLSTLLSIKTGGCAEDCGYCPQSTHFETEVKASKLMPLAEVIEAARAAKDQGATRFCMGAAWRSPKERDMERVTEIVREVRSLGLETCMTLGMLQAEQAQALKDAGLDYYNHNLDSAPEFYGDIISTRTYQDRLDTLGHVRQAGINVCCGGIVGMGESRLQRAGLIAQLANLSPYPESVPINNLVPVAGTPLANTAPLDPFEFVRTIAVARITMPLTMVRLSAGREQMDEALQALCFAAGANSIFYGDKLLTTSNPQADRDRQLFERLGLKTQGARPAAQQAQ</sequence>
<organism>
    <name type="scientific">Polaromonas sp. (strain JS666 / ATCC BAA-500)</name>
    <dbReference type="NCBI Taxonomy" id="296591"/>
    <lineage>
        <taxon>Bacteria</taxon>
        <taxon>Pseudomonadati</taxon>
        <taxon>Pseudomonadota</taxon>
        <taxon>Betaproteobacteria</taxon>
        <taxon>Burkholderiales</taxon>
        <taxon>Comamonadaceae</taxon>
        <taxon>Polaromonas</taxon>
    </lineage>
</organism>
<evidence type="ECO:0000255" key="1">
    <source>
        <dbReference type="HAMAP-Rule" id="MF_01694"/>
    </source>
</evidence>
<evidence type="ECO:0000255" key="2">
    <source>
        <dbReference type="PROSITE-ProRule" id="PRU01266"/>
    </source>
</evidence>
<evidence type="ECO:0000305" key="3"/>
<gene>
    <name evidence="1" type="primary">bioB2</name>
    <name type="ordered locus">Bpro_1580</name>
</gene>
<dbReference type="EC" id="2.8.1.6" evidence="1"/>
<dbReference type="EMBL" id="CP000316">
    <property type="protein sequence ID" value="ABE43519.1"/>
    <property type="status" value="ALT_INIT"/>
    <property type="molecule type" value="Genomic_DNA"/>
</dbReference>
<dbReference type="SMR" id="Q12D73"/>
<dbReference type="STRING" id="296591.Bpro_1580"/>
<dbReference type="KEGG" id="pol:Bpro_1580"/>
<dbReference type="eggNOG" id="COG0502">
    <property type="taxonomic scope" value="Bacteria"/>
</dbReference>
<dbReference type="HOGENOM" id="CLU_033172_1_2_4"/>
<dbReference type="OrthoDB" id="9786826at2"/>
<dbReference type="UniPathway" id="UPA00078">
    <property type="reaction ID" value="UER00162"/>
</dbReference>
<dbReference type="Proteomes" id="UP000001983">
    <property type="component" value="Chromosome"/>
</dbReference>
<dbReference type="GO" id="GO:0051537">
    <property type="term" value="F:2 iron, 2 sulfur cluster binding"/>
    <property type="evidence" value="ECO:0007669"/>
    <property type="project" value="UniProtKB-KW"/>
</dbReference>
<dbReference type="GO" id="GO:0051539">
    <property type="term" value="F:4 iron, 4 sulfur cluster binding"/>
    <property type="evidence" value="ECO:0007669"/>
    <property type="project" value="UniProtKB-KW"/>
</dbReference>
<dbReference type="GO" id="GO:0004076">
    <property type="term" value="F:biotin synthase activity"/>
    <property type="evidence" value="ECO:0007669"/>
    <property type="project" value="UniProtKB-UniRule"/>
</dbReference>
<dbReference type="GO" id="GO:0005506">
    <property type="term" value="F:iron ion binding"/>
    <property type="evidence" value="ECO:0007669"/>
    <property type="project" value="UniProtKB-UniRule"/>
</dbReference>
<dbReference type="GO" id="GO:0009102">
    <property type="term" value="P:biotin biosynthetic process"/>
    <property type="evidence" value="ECO:0007669"/>
    <property type="project" value="UniProtKB-UniRule"/>
</dbReference>
<dbReference type="CDD" id="cd01335">
    <property type="entry name" value="Radical_SAM"/>
    <property type="match status" value="1"/>
</dbReference>
<dbReference type="FunFam" id="3.20.20.70:FF:000011">
    <property type="entry name" value="Biotin synthase"/>
    <property type="match status" value="1"/>
</dbReference>
<dbReference type="Gene3D" id="3.20.20.70">
    <property type="entry name" value="Aldolase class I"/>
    <property type="match status" value="1"/>
</dbReference>
<dbReference type="HAMAP" id="MF_01694">
    <property type="entry name" value="BioB"/>
    <property type="match status" value="1"/>
</dbReference>
<dbReference type="InterPro" id="IPR013785">
    <property type="entry name" value="Aldolase_TIM"/>
</dbReference>
<dbReference type="InterPro" id="IPR010722">
    <property type="entry name" value="BATS_dom"/>
</dbReference>
<dbReference type="InterPro" id="IPR002684">
    <property type="entry name" value="Biotin_synth/BioAB"/>
</dbReference>
<dbReference type="InterPro" id="IPR024177">
    <property type="entry name" value="Biotin_synthase"/>
</dbReference>
<dbReference type="InterPro" id="IPR006638">
    <property type="entry name" value="Elp3/MiaA/NifB-like_rSAM"/>
</dbReference>
<dbReference type="InterPro" id="IPR007197">
    <property type="entry name" value="rSAM"/>
</dbReference>
<dbReference type="NCBIfam" id="TIGR00433">
    <property type="entry name" value="bioB"/>
    <property type="match status" value="1"/>
</dbReference>
<dbReference type="PANTHER" id="PTHR22976">
    <property type="entry name" value="BIOTIN SYNTHASE"/>
    <property type="match status" value="1"/>
</dbReference>
<dbReference type="PANTHER" id="PTHR22976:SF2">
    <property type="entry name" value="BIOTIN SYNTHASE, MITOCHONDRIAL"/>
    <property type="match status" value="1"/>
</dbReference>
<dbReference type="Pfam" id="PF06968">
    <property type="entry name" value="BATS"/>
    <property type="match status" value="1"/>
</dbReference>
<dbReference type="Pfam" id="PF04055">
    <property type="entry name" value="Radical_SAM"/>
    <property type="match status" value="1"/>
</dbReference>
<dbReference type="PIRSF" id="PIRSF001619">
    <property type="entry name" value="Biotin_synth"/>
    <property type="match status" value="1"/>
</dbReference>
<dbReference type="SFLD" id="SFLDF00272">
    <property type="entry name" value="biotin_synthase"/>
    <property type="match status" value="1"/>
</dbReference>
<dbReference type="SFLD" id="SFLDS00029">
    <property type="entry name" value="Radical_SAM"/>
    <property type="match status" value="1"/>
</dbReference>
<dbReference type="SMART" id="SM00876">
    <property type="entry name" value="BATS"/>
    <property type="match status" value="1"/>
</dbReference>
<dbReference type="SMART" id="SM00729">
    <property type="entry name" value="Elp3"/>
    <property type="match status" value="1"/>
</dbReference>
<dbReference type="SUPFAM" id="SSF102114">
    <property type="entry name" value="Radical SAM enzymes"/>
    <property type="match status" value="1"/>
</dbReference>
<dbReference type="PROSITE" id="PS51918">
    <property type="entry name" value="RADICAL_SAM"/>
    <property type="match status" value="1"/>
</dbReference>
<feature type="chain" id="PRO_0000381530" description="Biotin synthase 2">
    <location>
        <begin position="1"/>
        <end position="343"/>
    </location>
</feature>
<feature type="domain" description="Radical SAM core" evidence="2">
    <location>
        <begin position="58"/>
        <end position="285"/>
    </location>
</feature>
<feature type="binding site" evidence="1">
    <location>
        <position position="73"/>
    </location>
    <ligand>
        <name>[4Fe-4S] cluster</name>
        <dbReference type="ChEBI" id="CHEBI:49883"/>
        <note>4Fe-4S-S-AdoMet</note>
    </ligand>
</feature>
<feature type="binding site" evidence="1">
    <location>
        <position position="77"/>
    </location>
    <ligand>
        <name>[4Fe-4S] cluster</name>
        <dbReference type="ChEBI" id="CHEBI:49883"/>
        <note>4Fe-4S-S-AdoMet</note>
    </ligand>
</feature>
<feature type="binding site" evidence="1">
    <location>
        <position position="80"/>
    </location>
    <ligand>
        <name>[4Fe-4S] cluster</name>
        <dbReference type="ChEBI" id="CHEBI:49883"/>
        <note>4Fe-4S-S-AdoMet</note>
    </ligand>
</feature>
<feature type="binding site" evidence="1">
    <location>
        <position position="117"/>
    </location>
    <ligand>
        <name>[2Fe-2S] cluster</name>
        <dbReference type="ChEBI" id="CHEBI:190135"/>
    </ligand>
</feature>
<feature type="binding site" evidence="1">
    <location>
        <position position="148"/>
    </location>
    <ligand>
        <name>[2Fe-2S] cluster</name>
        <dbReference type="ChEBI" id="CHEBI:190135"/>
    </ligand>
</feature>
<feature type="binding site" evidence="1">
    <location>
        <position position="208"/>
    </location>
    <ligand>
        <name>[2Fe-2S] cluster</name>
        <dbReference type="ChEBI" id="CHEBI:190135"/>
    </ligand>
</feature>
<feature type="binding site" evidence="1">
    <location>
        <position position="280"/>
    </location>
    <ligand>
        <name>[2Fe-2S] cluster</name>
        <dbReference type="ChEBI" id="CHEBI:190135"/>
    </ligand>
</feature>
<name>BIOB2_POLSJ</name>
<proteinExistence type="inferred from homology"/>
<reference key="1">
    <citation type="journal article" date="2008" name="Appl. Environ. Microbiol.">
        <title>The genome of Polaromonas sp. strain JS666: insights into the evolution of a hydrocarbon- and xenobiotic-degrading bacterium, and features of relevance to biotechnology.</title>
        <authorList>
            <person name="Mattes T.E."/>
            <person name="Alexander A.K."/>
            <person name="Richardson P.M."/>
            <person name="Munk A.C."/>
            <person name="Han C.S."/>
            <person name="Stothard P."/>
            <person name="Coleman N.V."/>
        </authorList>
    </citation>
    <scope>NUCLEOTIDE SEQUENCE [LARGE SCALE GENOMIC DNA]</scope>
    <source>
        <strain>JS666 / ATCC BAA-500</strain>
    </source>
</reference>